<sequence>MTLKQVIVVRDDLKLSRGKLAVQVAHAAIIGYLKSDSSLRRKWLDEGQKKVVLKVKSLEELLGIKHKAESLGLVTGLVQDAGLTEVPPGTITAVVIGPDEERKIDKVTGNLPLLK</sequence>
<dbReference type="EC" id="3.1.1.29" evidence="1"/>
<dbReference type="EMBL" id="AE000782">
    <property type="protein sequence ID" value="AAB89160.1"/>
    <property type="molecule type" value="Genomic_DNA"/>
</dbReference>
<dbReference type="PIR" id="G69511">
    <property type="entry name" value="G69511"/>
</dbReference>
<dbReference type="PDB" id="1RZW">
    <property type="method" value="NMR"/>
    <property type="chains" value="A=1-115"/>
</dbReference>
<dbReference type="PDB" id="3ERJ">
    <property type="method" value="X-ray"/>
    <property type="resolution" value="1.80 A"/>
    <property type="chains" value="A/B=1-115"/>
</dbReference>
<dbReference type="PDBsum" id="1RZW"/>
<dbReference type="PDBsum" id="3ERJ"/>
<dbReference type="BMRB" id="O28185"/>
<dbReference type="SMR" id="O28185"/>
<dbReference type="STRING" id="224325.AF_2095"/>
<dbReference type="PaxDb" id="224325-AF_2095"/>
<dbReference type="EnsemblBacteria" id="AAB89160">
    <property type="protein sequence ID" value="AAB89160"/>
    <property type="gene ID" value="AF_2095"/>
</dbReference>
<dbReference type="KEGG" id="afu:AF_2095"/>
<dbReference type="eggNOG" id="arCOG04228">
    <property type="taxonomic scope" value="Archaea"/>
</dbReference>
<dbReference type="HOGENOM" id="CLU_073661_2_2_2"/>
<dbReference type="OrthoDB" id="6075at2157"/>
<dbReference type="PhylomeDB" id="O28185"/>
<dbReference type="BRENDA" id="3.1.1.29">
    <property type="organism ID" value="414"/>
</dbReference>
<dbReference type="EvolutionaryTrace" id="O28185"/>
<dbReference type="Proteomes" id="UP000002199">
    <property type="component" value="Chromosome"/>
</dbReference>
<dbReference type="GO" id="GO:0005829">
    <property type="term" value="C:cytosol"/>
    <property type="evidence" value="ECO:0007669"/>
    <property type="project" value="TreeGrafter"/>
</dbReference>
<dbReference type="GO" id="GO:0004045">
    <property type="term" value="F:peptidyl-tRNA hydrolase activity"/>
    <property type="evidence" value="ECO:0007669"/>
    <property type="project" value="UniProtKB-UniRule"/>
</dbReference>
<dbReference type="GO" id="GO:0006412">
    <property type="term" value="P:translation"/>
    <property type="evidence" value="ECO:0007669"/>
    <property type="project" value="UniProtKB-UniRule"/>
</dbReference>
<dbReference type="CDD" id="cd02430">
    <property type="entry name" value="PTH2"/>
    <property type="match status" value="1"/>
</dbReference>
<dbReference type="FunFam" id="3.40.1490.10:FF:000001">
    <property type="entry name" value="Peptidyl-tRNA hydrolase 2"/>
    <property type="match status" value="1"/>
</dbReference>
<dbReference type="Gene3D" id="3.40.1490.10">
    <property type="entry name" value="Bit1"/>
    <property type="match status" value="1"/>
</dbReference>
<dbReference type="HAMAP" id="MF_00628">
    <property type="entry name" value="Pept_tRNA_hydro_arch"/>
    <property type="match status" value="1"/>
</dbReference>
<dbReference type="InterPro" id="IPR023476">
    <property type="entry name" value="Pep_tRNA_hydro_II_dom_sf"/>
</dbReference>
<dbReference type="InterPro" id="IPR034759">
    <property type="entry name" value="Pept_tRNA_hydro_arch"/>
</dbReference>
<dbReference type="InterPro" id="IPR002833">
    <property type="entry name" value="PTH2"/>
</dbReference>
<dbReference type="NCBIfam" id="TIGR00283">
    <property type="entry name" value="arch_pth2"/>
    <property type="match status" value="1"/>
</dbReference>
<dbReference type="NCBIfam" id="NF003314">
    <property type="entry name" value="PRK04322.1"/>
    <property type="match status" value="1"/>
</dbReference>
<dbReference type="PANTHER" id="PTHR12649">
    <property type="entry name" value="PEPTIDYL-TRNA HYDROLASE 2"/>
    <property type="match status" value="1"/>
</dbReference>
<dbReference type="PANTHER" id="PTHR12649:SF11">
    <property type="entry name" value="PEPTIDYL-TRNA HYDROLASE 2, MITOCHONDRIAL"/>
    <property type="match status" value="1"/>
</dbReference>
<dbReference type="Pfam" id="PF01981">
    <property type="entry name" value="PTH2"/>
    <property type="match status" value="1"/>
</dbReference>
<dbReference type="SUPFAM" id="SSF102462">
    <property type="entry name" value="Peptidyl-tRNA hydrolase II"/>
    <property type="match status" value="1"/>
</dbReference>
<reference key="1">
    <citation type="journal article" date="1997" name="Nature">
        <title>The complete genome sequence of the hyperthermophilic, sulphate-reducing archaeon Archaeoglobus fulgidus.</title>
        <authorList>
            <person name="Klenk H.-P."/>
            <person name="Clayton R.A."/>
            <person name="Tomb J.-F."/>
            <person name="White O."/>
            <person name="Nelson K.E."/>
            <person name="Ketchum K.A."/>
            <person name="Dodson R.J."/>
            <person name="Gwinn M.L."/>
            <person name="Hickey E.K."/>
            <person name="Peterson J.D."/>
            <person name="Richardson D.L."/>
            <person name="Kerlavage A.R."/>
            <person name="Graham D.E."/>
            <person name="Kyrpides N.C."/>
            <person name="Fleischmann R.D."/>
            <person name="Quackenbush J."/>
            <person name="Lee N.H."/>
            <person name="Sutton G.G."/>
            <person name="Gill S.R."/>
            <person name="Kirkness E.F."/>
            <person name="Dougherty B.A."/>
            <person name="McKenney K."/>
            <person name="Adams M.D."/>
            <person name="Loftus B.J."/>
            <person name="Peterson S.N."/>
            <person name="Reich C.I."/>
            <person name="McNeil L.K."/>
            <person name="Badger J.H."/>
            <person name="Glodek A."/>
            <person name="Zhou L."/>
            <person name="Overbeek R."/>
            <person name="Gocayne J.D."/>
            <person name="Weidman J.F."/>
            <person name="McDonald L.A."/>
            <person name="Utterback T.R."/>
            <person name="Cotton M.D."/>
            <person name="Spriggs T."/>
            <person name="Artiach P."/>
            <person name="Kaine B.P."/>
            <person name="Sykes S.M."/>
            <person name="Sadow P.W."/>
            <person name="D'Andrea K.P."/>
            <person name="Bowman C."/>
            <person name="Fujii C."/>
            <person name="Garland S.A."/>
            <person name="Mason T.M."/>
            <person name="Olsen G.J."/>
            <person name="Fraser C.M."/>
            <person name="Smith H.O."/>
            <person name="Woese C.R."/>
            <person name="Venter J.C."/>
        </authorList>
    </citation>
    <scope>NUCLEOTIDE SEQUENCE [LARGE SCALE GENOMIC DNA]</scope>
    <source>
        <strain>ATCC 49558 / DSM 4304 / JCM 9628 / NBRC 100126 / VC-16</strain>
    </source>
</reference>
<feature type="chain" id="PRO_0000120288" description="Peptidyl-tRNA hydrolase">
    <location>
        <begin position="1"/>
        <end position="115"/>
    </location>
</feature>
<feature type="strand" evidence="2">
    <location>
        <begin position="3"/>
        <end position="13"/>
    </location>
</feature>
<feature type="helix" evidence="2">
    <location>
        <begin position="17"/>
        <end position="34"/>
    </location>
</feature>
<feature type="helix" evidence="2">
    <location>
        <begin position="37"/>
        <end position="45"/>
    </location>
</feature>
<feature type="strand" evidence="2">
    <location>
        <begin position="50"/>
        <end position="57"/>
    </location>
</feature>
<feature type="helix" evidence="2">
    <location>
        <begin position="58"/>
        <end position="71"/>
    </location>
</feature>
<feature type="strand" evidence="2">
    <location>
        <begin position="75"/>
        <end position="78"/>
    </location>
</feature>
<feature type="strand" evidence="2">
    <location>
        <begin position="84"/>
        <end position="86"/>
    </location>
</feature>
<feature type="strand" evidence="2">
    <location>
        <begin position="93"/>
        <end position="100"/>
    </location>
</feature>
<feature type="helix" evidence="2">
    <location>
        <begin position="101"/>
        <end position="108"/>
    </location>
</feature>
<proteinExistence type="evidence at protein level"/>
<accession>O28185</accession>
<keyword id="KW-0002">3D-structure</keyword>
<keyword id="KW-0963">Cytoplasm</keyword>
<keyword id="KW-0378">Hydrolase</keyword>
<keyword id="KW-1185">Reference proteome</keyword>
<organism>
    <name type="scientific">Archaeoglobus fulgidus (strain ATCC 49558 / DSM 4304 / JCM 9628 / NBRC 100126 / VC-16)</name>
    <dbReference type="NCBI Taxonomy" id="224325"/>
    <lineage>
        <taxon>Archaea</taxon>
        <taxon>Methanobacteriati</taxon>
        <taxon>Methanobacteriota</taxon>
        <taxon>Archaeoglobi</taxon>
        <taxon>Archaeoglobales</taxon>
        <taxon>Archaeoglobaceae</taxon>
        <taxon>Archaeoglobus</taxon>
    </lineage>
</organism>
<comment type="function">
    <text evidence="1">The natural substrate for this enzyme may be peptidyl-tRNAs which drop off the ribosome during protein synthesis.</text>
</comment>
<comment type="catalytic activity">
    <reaction evidence="1">
        <text>an N-acyl-L-alpha-aminoacyl-tRNA + H2O = an N-acyl-L-amino acid + a tRNA + H(+)</text>
        <dbReference type="Rhea" id="RHEA:54448"/>
        <dbReference type="Rhea" id="RHEA-COMP:10123"/>
        <dbReference type="Rhea" id="RHEA-COMP:13883"/>
        <dbReference type="ChEBI" id="CHEBI:15377"/>
        <dbReference type="ChEBI" id="CHEBI:15378"/>
        <dbReference type="ChEBI" id="CHEBI:59874"/>
        <dbReference type="ChEBI" id="CHEBI:78442"/>
        <dbReference type="ChEBI" id="CHEBI:138191"/>
        <dbReference type="EC" id="3.1.1.29"/>
    </reaction>
</comment>
<comment type="subcellular location">
    <subcellularLocation>
        <location evidence="1">Cytoplasm</location>
    </subcellularLocation>
</comment>
<comment type="similarity">
    <text evidence="1">Belongs to the PTH2 family.</text>
</comment>
<gene>
    <name evidence="1" type="primary">pth</name>
    <name type="ordered locus">AF_2095</name>
</gene>
<protein>
    <recommendedName>
        <fullName evidence="1">Peptidyl-tRNA hydrolase</fullName>
        <shortName evidence="1">PTH</shortName>
        <ecNumber evidence="1">3.1.1.29</ecNumber>
    </recommendedName>
</protein>
<evidence type="ECO:0000255" key="1">
    <source>
        <dbReference type="HAMAP-Rule" id="MF_00628"/>
    </source>
</evidence>
<evidence type="ECO:0007829" key="2">
    <source>
        <dbReference type="PDB" id="3ERJ"/>
    </source>
</evidence>
<name>PTH_ARCFU</name>